<dbReference type="EC" id="2.7.4.3" evidence="1"/>
<dbReference type="EMBL" id="CH476609">
    <property type="protein sequence ID" value="EAU29652.1"/>
    <property type="molecule type" value="Genomic_DNA"/>
</dbReference>
<dbReference type="RefSeq" id="XP_001209505.1">
    <property type="nucleotide sequence ID" value="XM_001209505.1"/>
</dbReference>
<dbReference type="SMR" id="Q0C7Y1"/>
<dbReference type="STRING" id="341663.Q0C7Y1"/>
<dbReference type="EnsemblFungi" id="EAU29652">
    <property type="protein sequence ID" value="EAU29652"/>
    <property type="gene ID" value="ATEG_10203"/>
</dbReference>
<dbReference type="GeneID" id="4319398"/>
<dbReference type="VEuPathDB" id="FungiDB:ATEG_10203"/>
<dbReference type="eggNOG" id="KOG3078">
    <property type="taxonomic scope" value="Eukaryota"/>
</dbReference>
<dbReference type="HOGENOM" id="CLU_032354_1_0_1"/>
<dbReference type="OMA" id="VYHEQTA"/>
<dbReference type="OrthoDB" id="439792at2759"/>
<dbReference type="Proteomes" id="UP000007963">
    <property type="component" value="Unassembled WGS sequence"/>
</dbReference>
<dbReference type="GO" id="GO:0005829">
    <property type="term" value="C:cytosol"/>
    <property type="evidence" value="ECO:0007669"/>
    <property type="project" value="UniProtKB-SubCell"/>
</dbReference>
<dbReference type="GO" id="GO:0005758">
    <property type="term" value="C:mitochondrial intermembrane space"/>
    <property type="evidence" value="ECO:0007669"/>
    <property type="project" value="UniProtKB-SubCell"/>
</dbReference>
<dbReference type="GO" id="GO:0004017">
    <property type="term" value="F:adenylate kinase activity"/>
    <property type="evidence" value="ECO:0007669"/>
    <property type="project" value="UniProtKB-UniRule"/>
</dbReference>
<dbReference type="GO" id="GO:0016208">
    <property type="term" value="F:AMP binding"/>
    <property type="evidence" value="ECO:0007669"/>
    <property type="project" value="EnsemblFungi"/>
</dbReference>
<dbReference type="GO" id="GO:0005524">
    <property type="term" value="F:ATP binding"/>
    <property type="evidence" value="ECO:0007669"/>
    <property type="project" value="UniProtKB-KW"/>
</dbReference>
<dbReference type="GO" id="GO:0003688">
    <property type="term" value="F:DNA replication origin binding"/>
    <property type="evidence" value="ECO:0007669"/>
    <property type="project" value="EnsemblFungi"/>
</dbReference>
<dbReference type="GO" id="GO:0006172">
    <property type="term" value="P:ADP biosynthetic process"/>
    <property type="evidence" value="ECO:0007669"/>
    <property type="project" value="UniProtKB-UniRule"/>
</dbReference>
<dbReference type="GO" id="GO:0046033">
    <property type="term" value="P:AMP metabolic process"/>
    <property type="evidence" value="ECO:0007669"/>
    <property type="project" value="UniProtKB-UniRule"/>
</dbReference>
<dbReference type="GO" id="GO:0046034">
    <property type="term" value="P:ATP metabolic process"/>
    <property type="evidence" value="ECO:0007669"/>
    <property type="project" value="UniProtKB-UniRule"/>
</dbReference>
<dbReference type="GO" id="GO:0006270">
    <property type="term" value="P:DNA replication initiation"/>
    <property type="evidence" value="ECO:0007669"/>
    <property type="project" value="EnsemblFungi"/>
</dbReference>
<dbReference type="GO" id="GO:0036388">
    <property type="term" value="P:pre-replicative complex assembly"/>
    <property type="evidence" value="ECO:0007669"/>
    <property type="project" value="EnsemblFungi"/>
</dbReference>
<dbReference type="CDD" id="cd01428">
    <property type="entry name" value="ADK"/>
    <property type="match status" value="1"/>
</dbReference>
<dbReference type="FunFam" id="3.40.50.300:FF:000106">
    <property type="entry name" value="Adenylate kinase mitochondrial"/>
    <property type="match status" value="1"/>
</dbReference>
<dbReference type="Gene3D" id="3.40.50.300">
    <property type="entry name" value="P-loop containing nucleotide triphosphate hydrolases"/>
    <property type="match status" value="1"/>
</dbReference>
<dbReference type="HAMAP" id="MF_00235">
    <property type="entry name" value="Adenylate_kinase_Adk"/>
    <property type="match status" value="1"/>
</dbReference>
<dbReference type="HAMAP" id="MF_03168">
    <property type="entry name" value="Adenylate_kinase_AK2"/>
    <property type="match status" value="1"/>
</dbReference>
<dbReference type="InterPro" id="IPR006259">
    <property type="entry name" value="Adenyl_kin_sub"/>
</dbReference>
<dbReference type="InterPro" id="IPR000850">
    <property type="entry name" value="Adenylat/UMP-CMP_kin"/>
</dbReference>
<dbReference type="InterPro" id="IPR033690">
    <property type="entry name" value="Adenylat_kinase_CS"/>
</dbReference>
<dbReference type="InterPro" id="IPR007862">
    <property type="entry name" value="Adenylate_kinase_lid-dom"/>
</dbReference>
<dbReference type="InterPro" id="IPR028587">
    <property type="entry name" value="AK2"/>
</dbReference>
<dbReference type="InterPro" id="IPR027417">
    <property type="entry name" value="P-loop_NTPase"/>
</dbReference>
<dbReference type="NCBIfam" id="TIGR01351">
    <property type="entry name" value="adk"/>
    <property type="match status" value="1"/>
</dbReference>
<dbReference type="NCBIfam" id="NF001380">
    <property type="entry name" value="PRK00279.1-2"/>
    <property type="match status" value="1"/>
</dbReference>
<dbReference type="NCBIfam" id="NF001381">
    <property type="entry name" value="PRK00279.1-3"/>
    <property type="match status" value="1"/>
</dbReference>
<dbReference type="NCBIfam" id="NF011100">
    <property type="entry name" value="PRK14527.1"/>
    <property type="match status" value="1"/>
</dbReference>
<dbReference type="PANTHER" id="PTHR23359">
    <property type="entry name" value="NUCLEOTIDE KINASE"/>
    <property type="match status" value="1"/>
</dbReference>
<dbReference type="Pfam" id="PF00406">
    <property type="entry name" value="ADK"/>
    <property type="match status" value="1"/>
</dbReference>
<dbReference type="Pfam" id="PF05191">
    <property type="entry name" value="ADK_lid"/>
    <property type="match status" value="1"/>
</dbReference>
<dbReference type="PRINTS" id="PR00094">
    <property type="entry name" value="ADENYLTKNASE"/>
</dbReference>
<dbReference type="SUPFAM" id="SSF52540">
    <property type="entry name" value="P-loop containing nucleoside triphosphate hydrolases"/>
    <property type="match status" value="1"/>
</dbReference>
<dbReference type="PROSITE" id="PS00113">
    <property type="entry name" value="ADENYLATE_KINASE"/>
    <property type="match status" value="1"/>
</dbReference>
<sequence>MAPITEETVAGLKDTIGKLEARIEDLEGRLGQSKPKSVAEQMRIILMGPPGAGKGTQAPRIKEKYCVCHLATGDMLRSQVAKKTELGKEAKKIMDQGGLVSDEIMVNMIKSELENNAECKNGFILDGFPRTVAQAERLDDMLAARQQKLQHAIELQIDDALLVARITGRLVHPASGRSYHKIFNPPKQEMKDDITGEPLIQRSDDNAETLKKRLGTYHAQTAPVCDYYKKTGIWRGIDASQEPGQVWKSLLGVFQKN</sequence>
<comment type="function">
    <text evidence="1">Catalyzes the reversible transfer of the terminal phosphate group between ATP and AMP. Plays an important role in cellular energy homeostasis and in adenine nucleotide metabolism. Adenylate kinase activity is critical for regulation of the phosphate utilization and the AMP de novo biosynthesis pathways.</text>
</comment>
<comment type="catalytic activity">
    <reaction evidence="1">
        <text>AMP + ATP = 2 ADP</text>
        <dbReference type="Rhea" id="RHEA:12973"/>
        <dbReference type="ChEBI" id="CHEBI:30616"/>
        <dbReference type="ChEBI" id="CHEBI:456215"/>
        <dbReference type="ChEBI" id="CHEBI:456216"/>
        <dbReference type="EC" id="2.7.4.3"/>
    </reaction>
</comment>
<comment type="subunit">
    <text evidence="1">Monomer.</text>
</comment>
<comment type="subcellular location">
    <subcellularLocation>
        <location evidence="1">Cytoplasm</location>
        <location evidence="1">Cytosol</location>
    </subcellularLocation>
    <subcellularLocation>
        <location evidence="1">Mitochondrion intermembrane space</location>
    </subcellularLocation>
    <text evidence="1">Predominantly mitochondrial.</text>
</comment>
<comment type="domain">
    <text evidence="1">Consists of three domains, a large central CORE domain and two small peripheral domains, NMPbind and LID, which undergo movements during catalysis. The LID domain closes over the site of phosphoryl transfer upon ATP binding. Assembling and dissambling the active center during each catalytic cycle provides an effective means to prevent ATP hydrolysis.</text>
</comment>
<comment type="similarity">
    <text evidence="1">Belongs to the adenylate kinase family. AK2 subfamily.</text>
</comment>
<proteinExistence type="inferred from homology"/>
<organism>
    <name type="scientific">Aspergillus terreus (strain NIH 2624 / FGSC A1156)</name>
    <dbReference type="NCBI Taxonomy" id="341663"/>
    <lineage>
        <taxon>Eukaryota</taxon>
        <taxon>Fungi</taxon>
        <taxon>Dikarya</taxon>
        <taxon>Ascomycota</taxon>
        <taxon>Pezizomycotina</taxon>
        <taxon>Eurotiomycetes</taxon>
        <taxon>Eurotiomycetidae</taxon>
        <taxon>Eurotiales</taxon>
        <taxon>Aspergillaceae</taxon>
        <taxon>Aspergillus</taxon>
        <taxon>Aspergillus subgen. Circumdati</taxon>
    </lineage>
</organism>
<accession>Q0C7Y1</accession>
<gene>
    <name type="primary">adk1</name>
    <name type="ORF">ATEG_10203</name>
</gene>
<reference key="1">
    <citation type="submission" date="2005-09" db="EMBL/GenBank/DDBJ databases">
        <title>Annotation of the Aspergillus terreus NIH2624 genome.</title>
        <authorList>
            <person name="Birren B.W."/>
            <person name="Lander E.S."/>
            <person name="Galagan J.E."/>
            <person name="Nusbaum C."/>
            <person name="Devon K."/>
            <person name="Henn M."/>
            <person name="Ma L.-J."/>
            <person name="Jaffe D.B."/>
            <person name="Butler J."/>
            <person name="Alvarez P."/>
            <person name="Gnerre S."/>
            <person name="Grabherr M."/>
            <person name="Kleber M."/>
            <person name="Mauceli E.W."/>
            <person name="Brockman W."/>
            <person name="Rounsley S."/>
            <person name="Young S.K."/>
            <person name="LaButti K."/>
            <person name="Pushparaj V."/>
            <person name="DeCaprio D."/>
            <person name="Crawford M."/>
            <person name="Koehrsen M."/>
            <person name="Engels R."/>
            <person name="Montgomery P."/>
            <person name="Pearson M."/>
            <person name="Howarth C."/>
            <person name="Larson L."/>
            <person name="Luoma S."/>
            <person name="White J."/>
            <person name="Alvarado L."/>
            <person name="Kodira C.D."/>
            <person name="Zeng Q."/>
            <person name="Oleary S."/>
            <person name="Yandava C."/>
            <person name="Denning D.W."/>
            <person name="Nierman W.C."/>
            <person name="Milne T."/>
            <person name="Madden K."/>
        </authorList>
    </citation>
    <scope>NUCLEOTIDE SEQUENCE [LARGE SCALE GENOMIC DNA]</scope>
    <source>
        <strain>NIH 2624 / FGSC A1156</strain>
    </source>
</reference>
<protein>
    <recommendedName>
        <fullName evidence="1">Adenylate kinase</fullName>
        <ecNumber evidence="1">2.7.4.3</ecNumber>
    </recommendedName>
    <alternativeName>
        <fullName evidence="1">ATP-AMP transphosphorylase</fullName>
    </alternativeName>
    <alternativeName>
        <fullName evidence="1">ATP:AMP phosphotransferase</fullName>
    </alternativeName>
    <alternativeName>
        <fullName evidence="1">Adenylate kinase cytosolic and mitochondrial</fullName>
    </alternativeName>
    <alternativeName>
        <fullName evidence="1">Adenylate monophosphate kinase</fullName>
    </alternativeName>
</protein>
<keyword id="KW-0067">ATP-binding</keyword>
<keyword id="KW-0963">Cytoplasm</keyword>
<keyword id="KW-0418">Kinase</keyword>
<keyword id="KW-0496">Mitochondrion</keyword>
<keyword id="KW-0547">Nucleotide-binding</keyword>
<keyword id="KW-1185">Reference proteome</keyword>
<keyword id="KW-0808">Transferase</keyword>
<evidence type="ECO:0000255" key="1">
    <source>
        <dbReference type="HAMAP-Rule" id="MF_03168"/>
    </source>
</evidence>
<name>KAD2_ASPTN</name>
<feature type="chain" id="PRO_0000365664" description="Adenylate kinase">
    <location>
        <begin position="1"/>
        <end position="257"/>
    </location>
</feature>
<feature type="region of interest" description="NMP" evidence="1">
    <location>
        <begin position="71"/>
        <end position="100"/>
    </location>
</feature>
<feature type="region of interest" description="LID" evidence="1">
    <location>
        <begin position="168"/>
        <end position="205"/>
    </location>
</feature>
<feature type="binding site" evidence="1">
    <location>
        <begin position="51"/>
        <end position="56"/>
    </location>
    <ligand>
        <name>ATP</name>
        <dbReference type="ChEBI" id="CHEBI:30616"/>
    </ligand>
</feature>
<feature type="binding site" evidence="1">
    <location>
        <position position="72"/>
    </location>
    <ligand>
        <name>AMP</name>
        <dbReference type="ChEBI" id="CHEBI:456215"/>
    </ligand>
</feature>
<feature type="binding site" evidence="1">
    <location>
        <position position="77"/>
    </location>
    <ligand>
        <name>AMP</name>
        <dbReference type="ChEBI" id="CHEBI:456215"/>
    </ligand>
</feature>
<feature type="binding site" evidence="1">
    <location>
        <begin position="98"/>
        <end position="100"/>
    </location>
    <ligand>
        <name>AMP</name>
        <dbReference type="ChEBI" id="CHEBI:456215"/>
    </ligand>
</feature>
<feature type="binding site" evidence="1">
    <location>
        <begin position="127"/>
        <end position="130"/>
    </location>
    <ligand>
        <name>AMP</name>
        <dbReference type="ChEBI" id="CHEBI:456215"/>
    </ligand>
</feature>
<feature type="binding site" evidence="1">
    <location>
        <position position="134"/>
    </location>
    <ligand>
        <name>AMP</name>
        <dbReference type="ChEBI" id="CHEBI:456215"/>
    </ligand>
</feature>
<feature type="binding site" evidence="1">
    <location>
        <position position="169"/>
    </location>
    <ligand>
        <name>ATP</name>
        <dbReference type="ChEBI" id="CHEBI:30616"/>
    </ligand>
</feature>
<feature type="binding site" evidence="1">
    <location>
        <begin position="178"/>
        <end position="179"/>
    </location>
    <ligand>
        <name>ATP</name>
        <dbReference type="ChEBI" id="CHEBI:30616"/>
    </ligand>
</feature>
<feature type="binding site" evidence="1">
    <location>
        <position position="202"/>
    </location>
    <ligand>
        <name>AMP</name>
        <dbReference type="ChEBI" id="CHEBI:456215"/>
    </ligand>
</feature>
<feature type="binding site" evidence="1">
    <location>
        <position position="213"/>
    </location>
    <ligand>
        <name>AMP</name>
        <dbReference type="ChEBI" id="CHEBI:456215"/>
    </ligand>
</feature>
<feature type="binding site" evidence="1">
    <location>
        <position position="241"/>
    </location>
    <ligand>
        <name>ATP</name>
        <dbReference type="ChEBI" id="CHEBI:30616"/>
    </ligand>
</feature>